<name>RIMK_ECOLU</name>
<protein>
    <recommendedName>
        <fullName evidence="1">Ribosomal protein bS6--L-glutamate ligase</fullName>
        <ecNumber evidence="1">6.3.2.-</ecNumber>
    </recommendedName>
    <alternativeName>
        <fullName evidence="1">Poly-alpha-glutamate synthase</fullName>
    </alternativeName>
    <alternativeName>
        <fullName evidence="1">Ribosomal protein bS6 modification protein</fullName>
    </alternativeName>
</protein>
<reference key="1">
    <citation type="journal article" date="2009" name="PLoS Genet.">
        <title>Organised genome dynamics in the Escherichia coli species results in highly diverse adaptive paths.</title>
        <authorList>
            <person name="Touchon M."/>
            <person name="Hoede C."/>
            <person name="Tenaillon O."/>
            <person name="Barbe V."/>
            <person name="Baeriswyl S."/>
            <person name="Bidet P."/>
            <person name="Bingen E."/>
            <person name="Bonacorsi S."/>
            <person name="Bouchier C."/>
            <person name="Bouvet O."/>
            <person name="Calteau A."/>
            <person name="Chiapello H."/>
            <person name="Clermont O."/>
            <person name="Cruveiller S."/>
            <person name="Danchin A."/>
            <person name="Diard M."/>
            <person name="Dossat C."/>
            <person name="Karoui M.E."/>
            <person name="Frapy E."/>
            <person name="Garry L."/>
            <person name="Ghigo J.M."/>
            <person name="Gilles A.M."/>
            <person name="Johnson J."/>
            <person name="Le Bouguenec C."/>
            <person name="Lescat M."/>
            <person name="Mangenot S."/>
            <person name="Martinez-Jehanne V."/>
            <person name="Matic I."/>
            <person name="Nassif X."/>
            <person name="Oztas S."/>
            <person name="Petit M.A."/>
            <person name="Pichon C."/>
            <person name="Rouy Z."/>
            <person name="Ruf C.S."/>
            <person name="Schneider D."/>
            <person name="Tourret J."/>
            <person name="Vacherie B."/>
            <person name="Vallenet D."/>
            <person name="Medigue C."/>
            <person name="Rocha E.P.C."/>
            <person name="Denamur E."/>
        </authorList>
    </citation>
    <scope>NUCLEOTIDE SEQUENCE [LARGE SCALE GENOMIC DNA]</scope>
    <source>
        <strain>UMN026 / ExPEC</strain>
    </source>
</reference>
<sequence length="300" mass="32436">MKIAILSRDGTLYSCKRLREAAIQRGHLVEILDPLSCYMNINPAASSIHYKGRKLPHFDAVIPRIGTAITFYGTAALRQFEMLGSYPLNESVAIARARDKLRSMQLLARQGIDLPVTGIAHSPDDTSDLIDMVGGAPLVVKLVEGTQGIGVVLAETRQAAESVIDAFRGLNAHILVQEYIKEAQGCDIRCLVVGDEVVAAIERRAKEGDFRSNLHRGGAASVASITPQEREIAIKAARTMALDVAGVDILRANRGPLVMEVNASPGLEGIEKTTGIDIAGKMIRWIERHATTEYCLKTGG</sequence>
<accession>B7NAJ8</accession>
<comment type="function">
    <text evidence="1">An L-glutamate ligase that catalyzes the ATP-dependent post-translational addition of glutamate residues to the C-terminus of ribosomal protein bS6 (RpsF). Is also able to catalyze the synthesis of poly-alpha-glutamate in vitro, via ATP hydrolysis from unprotected glutamate as substrate. The number of glutamate residues added to either RpsF or to poly-alpha-glutamate changes with pH.</text>
</comment>
<comment type="cofactor">
    <cofactor evidence="1">
        <name>Mg(2+)</name>
        <dbReference type="ChEBI" id="CHEBI:18420"/>
    </cofactor>
    <cofactor evidence="1">
        <name>Mn(2+)</name>
        <dbReference type="ChEBI" id="CHEBI:29035"/>
    </cofactor>
    <text evidence="1">Binds 2 magnesium or manganese ions per subunit.</text>
</comment>
<comment type="similarity">
    <text evidence="1">Belongs to the RimK family.</text>
</comment>
<organism>
    <name type="scientific">Escherichia coli O17:K52:H18 (strain UMN026 / ExPEC)</name>
    <dbReference type="NCBI Taxonomy" id="585056"/>
    <lineage>
        <taxon>Bacteria</taxon>
        <taxon>Pseudomonadati</taxon>
        <taxon>Pseudomonadota</taxon>
        <taxon>Gammaproteobacteria</taxon>
        <taxon>Enterobacterales</taxon>
        <taxon>Enterobacteriaceae</taxon>
        <taxon>Escherichia</taxon>
    </lineage>
</organism>
<dbReference type="EC" id="6.3.2.-" evidence="1"/>
<dbReference type="EMBL" id="CU928163">
    <property type="protein sequence ID" value="CAR12251.1"/>
    <property type="molecule type" value="Genomic_DNA"/>
</dbReference>
<dbReference type="RefSeq" id="WP_000684321.1">
    <property type="nucleotide sequence ID" value="NC_011751.1"/>
</dbReference>
<dbReference type="RefSeq" id="YP_002411795.1">
    <property type="nucleotide sequence ID" value="NC_011751.1"/>
</dbReference>
<dbReference type="SMR" id="B7NAJ8"/>
<dbReference type="STRING" id="585056.ECUMN_1042"/>
<dbReference type="GeneID" id="93776570"/>
<dbReference type="KEGG" id="eum:ECUMN_1042"/>
<dbReference type="PATRIC" id="fig|585056.7.peg.1235"/>
<dbReference type="HOGENOM" id="CLU_054353_0_1_6"/>
<dbReference type="Proteomes" id="UP000007097">
    <property type="component" value="Chromosome"/>
</dbReference>
<dbReference type="GO" id="GO:0005737">
    <property type="term" value="C:cytoplasm"/>
    <property type="evidence" value="ECO:0007669"/>
    <property type="project" value="TreeGrafter"/>
</dbReference>
<dbReference type="GO" id="GO:0005524">
    <property type="term" value="F:ATP binding"/>
    <property type="evidence" value="ECO:0007669"/>
    <property type="project" value="UniProtKB-UniRule"/>
</dbReference>
<dbReference type="GO" id="GO:0046872">
    <property type="term" value="F:metal ion binding"/>
    <property type="evidence" value="ECO:0007669"/>
    <property type="project" value="UniProtKB-KW"/>
</dbReference>
<dbReference type="GO" id="GO:0018169">
    <property type="term" value="F:ribosomal S6-glutamic acid ligase activity"/>
    <property type="evidence" value="ECO:0007669"/>
    <property type="project" value="UniProtKB-UniRule"/>
</dbReference>
<dbReference type="GO" id="GO:0036211">
    <property type="term" value="P:protein modification process"/>
    <property type="evidence" value="ECO:0007669"/>
    <property type="project" value="InterPro"/>
</dbReference>
<dbReference type="GO" id="GO:0009432">
    <property type="term" value="P:SOS response"/>
    <property type="evidence" value="ECO:0007669"/>
    <property type="project" value="TreeGrafter"/>
</dbReference>
<dbReference type="GO" id="GO:0006412">
    <property type="term" value="P:translation"/>
    <property type="evidence" value="ECO:0007669"/>
    <property type="project" value="UniProtKB-KW"/>
</dbReference>
<dbReference type="FunFam" id="3.40.50.20:FF:000004">
    <property type="entry name" value="Probable alpha-L-glutamate ligase"/>
    <property type="match status" value="1"/>
</dbReference>
<dbReference type="FunFam" id="3.30.1490.20:FF:000005">
    <property type="entry name" value="Probable alpha-L-glutamate ligase 1"/>
    <property type="match status" value="1"/>
</dbReference>
<dbReference type="FunFam" id="3.30.470.20:FF:000016">
    <property type="entry name" value="Ribosomal protein S6--L-glutamate ligase"/>
    <property type="match status" value="1"/>
</dbReference>
<dbReference type="Gene3D" id="3.40.50.20">
    <property type="match status" value="1"/>
</dbReference>
<dbReference type="Gene3D" id="3.30.1490.20">
    <property type="entry name" value="ATP-grasp fold, A domain"/>
    <property type="match status" value="1"/>
</dbReference>
<dbReference type="Gene3D" id="3.30.470.20">
    <property type="entry name" value="ATP-grasp fold, B domain"/>
    <property type="match status" value="1"/>
</dbReference>
<dbReference type="HAMAP" id="MF_01552">
    <property type="entry name" value="RimK"/>
    <property type="match status" value="1"/>
</dbReference>
<dbReference type="InterPro" id="IPR011761">
    <property type="entry name" value="ATP-grasp"/>
</dbReference>
<dbReference type="InterPro" id="IPR013651">
    <property type="entry name" value="ATP-grasp_RimK-type"/>
</dbReference>
<dbReference type="InterPro" id="IPR013815">
    <property type="entry name" value="ATP_grasp_subdomain_1"/>
</dbReference>
<dbReference type="InterPro" id="IPR023533">
    <property type="entry name" value="RimK"/>
</dbReference>
<dbReference type="InterPro" id="IPR041107">
    <property type="entry name" value="Rimk_N"/>
</dbReference>
<dbReference type="InterPro" id="IPR004666">
    <property type="entry name" value="Rp_bS6_RimK/Lys_biosynth_LsyX"/>
</dbReference>
<dbReference type="NCBIfam" id="NF007764">
    <property type="entry name" value="PRK10446.1"/>
    <property type="match status" value="1"/>
</dbReference>
<dbReference type="NCBIfam" id="TIGR00768">
    <property type="entry name" value="rimK_fam"/>
    <property type="match status" value="1"/>
</dbReference>
<dbReference type="PANTHER" id="PTHR21621:SF7">
    <property type="entry name" value="RIBOSOMAL PROTEIN BS6--L-GLUTAMATE LIGASE"/>
    <property type="match status" value="1"/>
</dbReference>
<dbReference type="PANTHER" id="PTHR21621">
    <property type="entry name" value="RIBOSOMAL PROTEIN S6 MODIFICATION PROTEIN"/>
    <property type="match status" value="1"/>
</dbReference>
<dbReference type="Pfam" id="PF08443">
    <property type="entry name" value="RimK"/>
    <property type="match status" value="1"/>
</dbReference>
<dbReference type="Pfam" id="PF18030">
    <property type="entry name" value="Rimk_N"/>
    <property type="match status" value="1"/>
</dbReference>
<dbReference type="SUPFAM" id="SSF56059">
    <property type="entry name" value="Glutathione synthetase ATP-binding domain-like"/>
    <property type="match status" value="1"/>
</dbReference>
<dbReference type="PROSITE" id="PS50975">
    <property type="entry name" value="ATP_GRASP"/>
    <property type="match status" value="1"/>
</dbReference>
<feature type="chain" id="PRO_1000194366" description="Ribosomal protein bS6--L-glutamate ligase">
    <location>
        <begin position="1"/>
        <end position="300"/>
    </location>
</feature>
<feature type="domain" description="ATP-grasp" evidence="1">
    <location>
        <begin position="104"/>
        <end position="287"/>
    </location>
</feature>
<feature type="binding site" evidence="1">
    <location>
        <position position="141"/>
    </location>
    <ligand>
        <name>ATP</name>
        <dbReference type="ChEBI" id="CHEBI:30616"/>
    </ligand>
</feature>
<feature type="binding site" evidence="1">
    <location>
        <begin position="178"/>
        <end position="179"/>
    </location>
    <ligand>
        <name>ATP</name>
        <dbReference type="ChEBI" id="CHEBI:30616"/>
    </ligand>
</feature>
<feature type="binding site" evidence="1">
    <location>
        <position position="187"/>
    </location>
    <ligand>
        <name>ATP</name>
        <dbReference type="ChEBI" id="CHEBI:30616"/>
    </ligand>
</feature>
<feature type="binding site" evidence="1">
    <location>
        <begin position="211"/>
        <end position="213"/>
    </location>
    <ligand>
        <name>ATP</name>
        <dbReference type="ChEBI" id="CHEBI:30616"/>
    </ligand>
</feature>
<feature type="binding site" evidence="1">
    <location>
        <position position="248"/>
    </location>
    <ligand>
        <name>Mg(2+)</name>
        <dbReference type="ChEBI" id="CHEBI:18420"/>
        <label>1</label>
    </ligand>
</feature>
<feature type="binding site" evidence="1">
    <location>
        <position position="248"/>
    </location>
    <ligand>
        <name>Mn(2+)</name>
        <dbReference type="ChEBI" id="CHEBI:29035"/>
        <label>1</label>
    </ligand>
</feature>
<feature type="binding site" evidence="1">
    <location>
        <position position="260"/>
    </location>
    <ligand>
        <name>Mg(2+)</name>
        <dbReference type="ChEBI" id="CHEBI:18420"/>
        <label>1</label>
    </ligand>
</feature>
<feature type="binding site" evidence="1">
    <location>
        <position position="260"/>
    </location>
    <ligand>
        <name>Mg(2+)</name>
        <dbReference type="ChEBI" id="CHEBI:18420"/>
        <label>2</label>
    </ligand>
</feature>
<feature type="binding site" evidence="1">
    <location>
        <position position="260"/>
    </location>
    <ligand>
        <name>Mn(2+)</name>
        <dbReference type="ChEBI" id="CHEBI:29035"/>
        <label>1</label>
    </ligand>
</feature>
<feature type="binding site" evidence="1">
    <location>
        <position position="260"/>
    </location>
    <ligand>
        <name>Mn(2+)</name>
        <dbReference type="ChEBI" id="CHEBI:29035"/>
        <label>2</label>
    </ligand>
</feature>
<feature type="binding site" evidence="1">
    <location>
        <position position="262"/>
    </location>
    <ligand>
        <name>Mg(2+)</name>
        <dbReference type="ChEBI" id="CHEBI:18420"/>
        <label>2</label>
    </ligand>
</feature>
<feature type="binding site" evidence="1">
    <location>
        <position position="262"/>
    </location>
    <ligand>
        <name>Mn(2+)</name>
        <dbReference type="ChEBI" id="CHEBI:29035"/>
        <label>2</label>
    </ligand>
</feature>
<proteinExistence type="inferred from homology"/>
<keyword id="KW-0067">ATP-binding</keyword>
<keyword id="KW-0436">Ligase</keyword>
<keyword id="KW-0460">Magnesium</keyword>
<keyword id="KW-0464">Manganese</keyword>
<keyword id="KW-0479">Metal-binding</keyword>
<keyword id="KW-0547">Nucleotide-binding</keyword>
<keyword id="KW-0648">Protein biosynthesis</keyword>
<gene>
    <name evidence="1" type="primary">rimK</name>
    <name type="ordered locus">ECUMN_1042</name>
</gene>
<evidence type="ECO:0000255" key="1">
    <source>
        <dbReference type="HAMAP-Rule" id="MF_01552"/>
    </source>
</evidence>